<keyword id="KW-0025">Alternative splicing</keyword>
<keyword id="KW-1003">Cell membrane</keyword>
<keyword id="KW-0472">Membrane</keyword>
<keyword id="KW-1185">Reference proteome</keyword>
<keyword id="KW-0769">Symport</keyword>
<keyword id="KW-0812">Transmembrane</keyword>
<keyword id="KW-1133">Transmembrane helix</keyword>
<keyword id="KW-0813">Transport</keyword>
<organism>
    <name type="scientific">Mus musculus</name>
    <name type="common">Mouse</name>
    <dbReference type="NCBI Taxonomy" id="10090"/>
    <lineage>
        <taxon>Eukaryota</taxon>
        <taxon>Metazoa</taxon>
        <taxon>Chordata</taxon>
        <taxon>Craniata</taxon>
        <taxon>Vertebrata</taxon>
        <taxon>Euteleostomi</taxon>
        <taxon>Mammalia</taxon>
        <taxon>Eutheria</taxon>
        <taxon>Euarchontoglires</taxon>
        <taxon>Glires</taxon>
        <taxon>Rodentia</taxon>
        <taxon>Myomorpha</taxon>
        <taxon>Muroidea</taxon>
        <taxon>Muridae</taxon>
        <taxon>Murinae</taxon>
        <taxon>Mus</taxon>
        <taxon>Mus</taxon>
    </lineage>
</organism>
<dbReference type="EMBL" id="AK045797">
    <property type="protein sequence ID" value="BAC32495.1"/>
    <property type="molecule type" value="mRNA"/>
</dbReference>
<dbReference type="EMBL" id="AK049873">
    <property type="protein sequence ID" value="BAC33967.1"/>
    <property type="molecule type" value="mRNA"/>
</dbReference>
<dbReference type="EMBL" id="AK052779">
    <property type="protein sequence ID" value="BAC35143.1"/>
    <property type="molecule type" value="mRNA"/>
</dbReference>
<dbReference type="EMBL" id="AK085492">
    <property type="protein sequence ID" value="BAC39456.1"/>
    <property type="molecule type" value="mRNA"/>
</dbReference>
<dbReference type="EMBL" id="AK136837">
    <property type="protein sequence ID" value="BAE23142.1"/>
    <property type="molecule type" value="mRNA"/>
</dbReference>
<dbReference type="EMBL" id="AC132405">
    <property type="status" value="NOT_ANNOTATED_CDS"/>
    <property type="molecule type" value="Genomic_DNA"/>
</dbReference>
<dbReference type="EMBL" id="CH466607">
    <property type="protein sequence ID" value="EDL01900.1"/>
    <property type="molecule type" value="Genomic_DNA"/>
</dbReference>
<dbReference type="EMBL" id="BC025441">
    <property type="protein sequence ID" value="AAH25441.1"/>
    <property type="molecule type" value="mRNA"/>
</dbReference>
<dbReference type="EMBL" id="BC026596">
    <property type="protein sequence ID" value="AAH26596.1"/>
    <property type="molecule type" value="mRNA"/>
</dbReference>
<dbReference type="CCDS" id="CCDS17736.1">
    <molecule id="Q8R0M8-1"/>
</dbReference>
<dbReference type="CCDS" id="CCDS79997.1">
    <molecule id="Q8R0M8-2"/>
</dbReference>
<dbReference type="RefSeq" id="NP_001297634.1">
    <molecule id="Q8R0M8-2"/>
    <property type="nucleotide sequence ID" value="NM_001310705.2"/>
</dbReference>
<dbReference type="RefSeq" id="NP_666248.1">
    <molecule id="Q8R0M8-1"/>
    <property type="nucleotide sequence ID" value="NM_146136.3"/>
</dbReference>
<dbReference type="SMR" id="Q8R0M8"/>
<dbReference type="FunCoup" id="Q8R0M8">
    <property type="interactions" value="8"/>
</dbReference>
<dbReference type="STRING" id="10090.ENSMUSP00000029502"/>
<dbReference type="iPTMnet" id="Q8R0M8"/>
<dbReference type="PhosphoSitePlus" id="Q8R0M8"/>
<dbReference type="PaxDb" id="10090-ENSMUSP00000029502"/>
<dbReference type="ProteomicsDB" id="252597">
    <molecule id="Q8R0M8-1"/>
</dbReference>
<dbReference type="ProteomicsDB" id="252598">
    <molecule id="Q8R0M8-2"/>
</dbReference>
<dbReference type="ProteomicsDB" id="252599">
    <molecule id="Q8R0M8-3"/>
</dbReference>
<dbReference type="Antibodypedia" id="20096">
    <property type="antibodies" value="117 antibodies from 24 providers"/>
</dbReference>
<dbReference type="DNASU" id="229699"/>
<dbReference type="Ensembl" id="ENSMUST00000029502.14">
    <molecule id="Q8R0M8-1"/>
    <property type="protein sequence ID" value="ENSMUSP00000029502.8"/>
    <property type="gene ID" value="ENSMUSG00000027896.16"/>
</dbReference>
<dbReference type="Ensembl" id="ENSMUST00000106723.2">
    <molecule id="Q8R0M8-2"/>
    <property type="protein sequence ID" value="ENSMUSP00000102334.2"/>
    <property type="gene ID" value="ENSMUSG00000027896.16"/>
</dbReference>
<dbReference type="GeneID" id="229699"/>
<dbReference type="KEGG" id="mmu:229699"/>
<dbReference type="UCSC" id="uc008qwx.1">
    <molecule id="Q8R0M8-3"/>
    <property type="organism name" value="mouse"/>
</dbReference>
<dbReference type="UCSC" id="uc008qwy.2">
    <molecule id="Q8R0M8-1"/>
    <property type="organism name" value="mouse"/>
</dbReference>
<dbReference type="AGR" id="MGI:2385183"/>
<dbReference type="CTD" id="9122"/>
<dbReference type="MGI" id="MGI:2385183">
    <property type="gene designation" value="Slc16a4"/>
</dbReference>
<dbReference type="VEuPathDB" id="HostDB:ENSMUSG00000027896"/>
<dbReference type="eggNOG" id="KOG2504">
    <property type="taxonomic scope" value="Eukaryota"/>
</dbReference>
<dbReference type="GeneTree" id="ENSGT00940000158411"/>
<dbReference type="HOGENOM" id="CLU_001265_59_2_1"/>
<dbReference type="InParanoid" id="Q8R0M8"/>
<dbReference type="OMA" id="YQAFSVV"/>
<dbReference type="OrthoDB" id="2213137at2759"/>
<dbReference type="PhylomeDB" id="Q8R0M8"/>
<dbReference type="TreeFam" id="TF313792"/>
<dbReference type="BioGRID-ORCS" id="229699">
    <property type="hits" value="1 hit in 78 CRISPR screens"/>
</dbReference>
<dbReference type="ChiTaRS" id="Slc16a4">
    <property type="organism name" value="mouse"/>
</dbReference>
<dbReference type="PRO" id="PR:Q8R0M8"/>
<dbReference type="Proteomes" id="UP000000589">
    <property type="component" value="Chromosome 3"/>
</dbReference>
<dbReference type="RNAct" id="Q8R0M8">
    <property type="molecule type" value="protein"/>
</dbReference>
<dbReference type="Bgee" id="ENSMUSG00000027896">
    <property type="expression patterns" value="Expressed in right kidney and 82 other cell types or tissues"/>
</dbReference>
<dbReference type="GO" id="GO:0005886">
    <property type="term" value="C:plasma membrane"/>
    <property type="evidence" value="ECO:0007669"/>
    <property type="project" value="UniProtKB-SubCell"/>
</dbReference>
<dbReference type="GO" id="GO:0015293">
    <property type="term" value="F:symporter activity"/>
    <property type="evidence" value="ECO:0007669"/>
    <property type="project" value="UniProtKB-KW"/>
</dbReference>
<dbReference type="CDD" id="cd17421">
    <property type="entry name" value="MFS_MCT5"/>
    <property type="match status" value="1"/>
</dbReference>
<dbReference type="FunFam" id="1.20.1250.20:FF:000141">
    <property type="entry name" value="Solute carrier family 16, member 4"/>
    <property type="match status" value="1"/>
</dbReference>
<dbReference type="FunFam" id="1.20.1250.20:FF:000944">
    <property type="entry name" value="Solute carrier family 16, member 4"/>
    <property type="match status" value="1"/>
</dbReference>
<dbReference type="Gene3D" id="1.20.1250.20">
    <property type="entry name" value="MFS general substrate transporter like domains"/>
    <property type="match status" value="2"/>
</dbReference>
<dbReference type="InterPro" id="IPR011701">
    <property type="entry name" value="MFS"/>
</dbReference>
<dbReference type="InterPro" id="IPR020846">
    <property type="entry name" value="MFS_dom"/>
</dbReference>
<dbReference type="InterPro" id="IPR036259">
    <property type="entry name" value="MFS_trans_sf"/>
</dbReference>
<dbReference type="InterPro" id="IPR050327">
    <property type="entry name" value="Proton-linked_MCT"/>
</dbReference>
<dbReference type="PANTHER" id="PTHR11360">
    <property type="entry name" value="MONOCARBOXYLATE TRANSPORTER"/>
    <property type="match status" value="1"/>
</dbReference>
<dbReference type="PANTHER" id="PTHR11360:SF14">
    <property type="entry name" value="MONOCARBOXYLATE TRANSPORTER 5"/>
    <property type="match status" value="1"/>
</dbReference>
<dbReference type="Pfam" id="PF07690">
    <property type="entry name" value="MFS_1"/>
    <property type="match status" value="2"/>
</dbReference>
<dbReference type="SUPFAM" id="SSF103473">
    <property type="entry name" value="MFS general substrate transporter"/>
    <property type="match status" value="1"/>
</dbReference>
<dbReference type="PROSITE" id="PS50850">
    <property type="entry name" value="MFS"/>
    <property type="match status" value="1"/>
</dbReference>
<sequence length="500" mass="55678">MVKKEKTPSPYTKPLDGGWGWMVVLHFFLVNVFVMGMTKTFAIFFVVFQEEFEGTSEQIGWIGSIMSSLRFSAGPLAAIICDVLGEKATSILGTFLVSGGYVISSWATGIPFLCVTMGLLPGLGSAFLYQVAAVVITKYFKKRLGLSTAIARSGMGLTFLLAPFTKFLIDLYDWTGALILFGAIILNLVPSSMLLRPIHSQSNNNSDIENKGSILSATEPEASYKTETSKCKETQEPFIKDSTMKKSEQPTTTLTVLGNQSEEFSNRPHRNRPLLMSNGKSHKKKFVSWNCKQKLLDISLFRNPFFYIFTWSFLLSQLAYFIPTFHLVARAKTLGIDVMDASYLVSVAGITETVSQLISGWIADQNWIKKYQYHKSYLILCGVTNLLAPLATTFPLLMAYTILFAIFAGGYLALILPVLVDLSKNSRVHKFLGYASFFAGIAVLSGPPIAGWIYDYTQTYTGSFYFSGTCYILSSVSLFFVPLAERWKRKQSDLLRTTIK</sequence>
<protein>
    <recommendedName>
        <fullName>Monocarboxylate transporter 5</fullName>
        <shortName>MCT 5</shortName>
    </recommendedName>
</protein>
<proteinExistence type="evidence at transcript level"/>
<gene>
    <name type="primary">Slc16a4</name>
    <name type="synonym">Mct5</name>
</gene>
<name>MOT5_MOUSE</name>
<accession>Q8R0M8</accession>
<accession>Q8BLA5</accession>
<accession>Q8BWE3</accession>
<accession>Q8R157</accession>
<feature type="chain" id="PRO_0000416125" description="Monocarboxylate transporter 5">
    <location>
        <begin position="1"/>
        <end position="500"/>
    </location>
</feature>
<feature type="topological domain" description="Cytoplasmic" evidence="2">
    <location>
        <begin position="1"/>
        <end position="16"/>
    </location>
</feature>
<feature type="transmembrane region" description="Helical" evidence="2">
    <location>
        <begin position="17"/>
        <end position="37"/>
    </location>
</feature>
<feature type="topological domain" description="Extracellular" evidence="2">
    <location>
        <begin position="38"/>
        <end position="58"/>
    </location>
</feature>
<feature type="transmembrane region" description="Helical" evidence="2">
    <location>
        <begin position="59"/>
        <end position="79"/>
    </location>
</feature>
<feature type="topological domain" description="Cytoplasmic" evidence="2">
    <location>
        <begin position="80"/>
        <end position="87"/>
    </location>
</feature>
<feature type="transmembrane region" description="Helical" evidence="2">
    <location>
        <begin position="88"/>
        <end position="108"/>
    </location>
</feature>
<feature type="topological domain" description="Extracellular" evidence="2">
    <location>
        <position position="109"/>
    </location>
</feature>
<feature type="transmembrane region" description="Helical" evidence="2">
    <location>
        <begin position="110"/>
        <end position="129"/>
    </location>
</feature>
<feature type="topological domain" description="Cytoplasmic" evidence="2">
    <location>
        <begin position="130"/>
        <end position="153"/>
    </location>
</feature>
<feature type="transmembrane region" description="Helical" evidence="2">
    <location>
        <begin position="154"/>
        <end position="174"/>
    </location>
</feature>
<feature type="topological domain" description="Extracellular" evidence="2">
    <location>
        <position position="175"/>
    </location>
</feature>
<feature type="transmembrane region" description="Helical" evidence="2">
    <location>
        <begin position="176"/>
        <end position="195"/>
    </location>
</feature>
<feature type="topological domain" description="Cytoplasmic" evidence="2">
    <location>
        <begin position="196"/>
        <end position="304"/>
    </location>
</feature>
<feature type="transmembrane region" description="Helical" evidence="2">
    <location>
        <begin position="305"/>
        <end position="325"/>
    </location>
</feature>
<feature type="topological domain" description="Extracellular" evidence="2">
    <location>
        <begin position="326"/>
        <end position="342"/>
    </location>
</feature>
<feature type="transmembrane region" description="Helical" evidence="2">
    <location>
        <begin position="343"/>
        <end position="363"/>
    </location>
</feature>
<feature type="topological domain" description="Cytoplasmic" evidence="2">
    <location>
        <begin position="364"/>
        <end position="374"/>
    </location>
</feature>
<feature type="transmembrane region" description="Helical" evidence="2">
    <location>
        <begin position="375"/>
        <end position="395"/>
    </location>
</feature>
<feature type="topological domain" description="Extracellular" evidence="2">
    <location>
        <position position="396"/>
    </location>
</feature>
<feature type="transmembrane region" description="Helical" evidence="2">
    <location>
        <begin position="397"/>
        <end position="416"/>
    </location>
</feature>
<feature type="topological domain" description="Cytoplasmic" evidence="2">
    <location>
        <begin position="417"/>
        <end position="430"/>
    </location>
</feature>
<feature type="transmembrane region" description="Helical" evidence="2">
    <location>
        <begin position="431"/>
        <end position="451"/>
    </location>
</feature>
<feature type="topological domain" description="Extracellular" evidence="2">
    <location>
        <begin position="452"/>
        <end position="463"/>
    </location>
</feature>
<feature type="transmembrane region" description="Helical" evidence="2">
    <location>
        <begin position="464"/>
        <end position="484"/>
    </location>
</feature>
<feature type="topological domain" description="Cytoplasmic" evidence="2">
    <location>
        <begin position="485"/>
        <end position="500"/>
    </location>
</feature>
<feature type="splice variant" id="VSP_042510" description="In isoform 3." evidence="4">
    <original>ITETVSQLISGWIADQNWIKKYQYHKSYLILCGVTNLLAPLATTFPLLMAYTILFAIFAGGYLALILPVLVDLSKNSRVHKFLGYASFFAGIAVLSGPPIAGWIYDYTQTYTGSFYFSGTCYILSSVSLFFVPLAERWKRKQSDLLRTTIK</original>
    <variation>KKNELSLIKVY</variation>
    <location>
        <begin position="350"/>
        <end position="500"/>
    </location>
</feature>
<feature type="splice variant" id="VSP_042511" description="In isoform 2." evidence="3">
    <original>GWIYDYTQTYTGSFYFSGTCYILSSVSLFFVPLAERWKRKQSDLLRTTIK</original>
    <variation>DVTHGWTTYLMHMKPLKT</variation>
    <location>
        <begin position="451"/>
        <end position="500"/>
    </location>
</feature>
<feature type="sequence conflict" description="In Ref. 1; BAC32495." evidence="5" ref="1">
    <original>N</original>
    <variation>D</variation>
    <location>
        <position position="366"/>
    </location>
</feature>
<comment type="function">
    <text evidence="1">Proton-linked monocarboxylate transporter. Catalyzes the rapid transport across the plasma membrane of many monocarboxylates such as lactate, pyruvate, branched-chain oxo acids derived from leucine, valine and isoleucine, and the ketone bodies acetoacetate, beta-hydroxybutyrate and acetate (By similarity).</text>
</comment>
<comment type="subcellular location">
    <subcellularLocation>
        <location evidence="1">Cell membrane</location>
        <topology evidence="1">Multi-pass membrane protein</topology>
    </subcellularLocation>
</comment>
<comment type="alternative products">
    <event type="alternative splicing"/>
    <isoform>
        <id>Q8R0M8-1</id>
        <name>1</name>
        <sequence type="displayed"/>
    </isoform>
    <isoform>
        <id>Q8R0M8-2</id>
        <name>2</name>
        <sequence type="described" ref="VSP_042511"/>
    </isoform>
    <isoform>
        <id>Q8R0M8-3</id>
        <name>3</name>
        <sequence type="described" ref="VSP_042510"/>
    </isoform>
</comment>
<comment type="similarity">
    <text evidence="5">Belongs to the major facilitator superfamily. Monocarboxylate porter (TC 2.A.1.13) family.</text>
</comment>
<evidence type="ECO:0000250" key="1"/>
<evidence type="ECO:0000255" key="2"/>
<evidence type="ECO:0000303" key="3">
    <source>
    </source>
</evidence>
<evidence type="ECO:0000303" key="4">
    <source>
    </source>
</evidence>
<evidence type="ECO:0000305" key="5"/>
<reference key="1">
    <citation type="journal article" date="2005" name="Science">
        <title>The transcriptional landscape of the mammalian genome.</title>
        <authorList>
            <person name="Carninci P."/>
            <person name="Kasukawa T."/>
            <person name="Katayama S."/>
            <person name="Gough J."/>
            <person name="Frith M.C."/>
            <person name="Maeda N."/>
            <person name="Oyama R."/>
            <person name="Ravasi T."/>
            <person name="Lenhard B."/>
            <person name="Wells C."/>
            <person name="Kodzius R."/>
            <person name="Shimokawa K."/>
            <person name="Bajic V.B."/>
            <person name="Brenner S.E."/>
            <person name="Batalov S."/>
            <person name="Forrest A.R."/>
            <person name="Zavolan M."/>
            <person name="Davis M.J."/>
            <person name="Wilming L.G."/>
            <person name="Aidinis V."/>
            <person name="Allen J.E."/>
            <person name="Ambesi-Impiombato A."/>
            <person name="Apweiler R."/>
            <person name="Aturaliya R.N."/>
            <person name="Bailey T.L."/>
            <person name="Bansal M."/>
            <person name="Baxter L."/>
            <person name="Beisel K.W."/>
            <person name="Bersano T."/>
            <person name="Bono H."/>
            <person name="Chalk A.M."/>
            <person name="Chiu K.P."/>
            <person name="Choudhary V."/>
            <person name="Christoffels A."/>
            <person name="Clutterbuck D.R."/>
            <person name="Crowe M.L."/>
            <person name="Dalla E."/>
            <person name="Dalrymple B.P."/>
            <person name="de Bono B."/>
            <person name="Della Gatta G."/>
            <person name="di Bernardo D."/>
            <person name="Down T."/>
            <person name="Engstrom P."/>
            <person name="Fagiolini M."/>
            <person name="Faulkner G."/>
            <person name="Fletcher C.F."/>
            <person name="Fukushima T."/>
            <person name="Furuno M."/>
            <person name="Futaki S."/>
            <person name="Gariboldi M."/>
            <person name="Georgii-Hemming P."/>
            <person name="Gingeras T.R."/>
            <person name="Gojobori T."/>
            <person name="Green R.E."/>
            <person name="Gustincich S."/>
            <person name="Harbers M."/>
            <person name="Hayashi Y."/>
            <person name="Hensch T.K."/>
            <person name="Hirokawa N."/>
            <person name="Hill D."/>
            <person name="Huminiecki L."/>
            <person name="Iacono M."/>
            <person name="Ikeo K."/>
            <person name="Iwama A."/>
            <person name="Ishikawa T."/>
            <person name="Jakt M."/>
            <person name="Kanapin A."/>
            <person name="Katoh M."/>
            <person name="Kawasawa Y."/>
            <person name="Kelso J."/>
            <person name="Kitamura H."/>
            <person name="Kitano H."/>
            <person name="Kollias G."/>
            <person name="Krishnan S.P."/>
            <person name="Kruger A."/>
            <person name="Kummerfeld S.K."/>
            <person name="Kurochkin I.V."/>
            <person name="Lareau L.F."/>
            <person name="Lazarevic D."/>
            <person name="Lipovich L."/>
            <person name="Liu J."/>
            <person name="Liuni S."/>
            <person name="McWilliam S."/>
            <person name="Madan Babu M."/>
            <person name="Madera M."/>
            <person name="Marchionni L."/>
            <person name="Matsuda H."/>
            <person name="Matsuzawa S."/>
            <person name="Miki H."/>
            <person name="Mignone F."/>
            <person name="Miyake S."/>
            <person name="Morris K."/>
            <person name="Mottagui-Tabar S."/>
            <person name="Mulder N."/>
            <person name="Nakano N."/>
            <person name="Nakauchi H."/>
            <person name="Ng P."/>
            <person name="Nilsson R."/>
            <person name="Nishiguchi S."/>
            <person name="Nishikawa S."/>
            <person name="Nori F."/>
            <person name="Ohara O."/>
            <person name="Okazaki Y."/>
            <person name="Orlando V."/>
            <person name="Pang K.C."/>
            <person name="Pavan W.J."/>
            <person name="Pavesi G."/>
            <person name="Pesole G."/>
            <person name="Petrovsky N."/>
            <person name="Piazza S."/>
            <person name="Reed J."/>
            <person name="Reid J.F."/>
            <person name="Ring B.Z."/>
            <person name="Ringwald M."/>
            <person name="Rost B."/>
            <person name="Ruan Y."/>
            <person name="Salzberg S.L."/>
            <person name="Sandelin A."/>
            <person name="Schneider C."/>
            <person name="Schoenbach C."/>
            <person name="Sekiguchi K."/>
            <person name="Semple C.A."/>
            <person name="Seno S."/>
            <person name="Sessa L."/>
            <person name="Sheng Y."/>
            <person name="Shibata Y."/>
            <person name="Shimada H."/>
            <person name="Shimada K."/>
            <person name="Silva D."/>
            <person name="Sinclair B."/>
            <person name="Sperling S."/>
            <person name="Stupka E."/>
            <person name="Sugiura K."/>
            <person name="Sultana R."/>
            <person name="Takenaka Y."/>
            <person name="Taki K."/>
            <person name="Tammoja K."/>
            <person name="Tan S.L."/>
            <person name="Tang S."/>
            <person name="Taylor M.S."/>
            <person name="Tegner J."/>
            <person name="Teichmann S.A."/>
            <person name="Ueda H.R."/>
            <person name="van Nimwegen E."/>
            <person name="Verardo R."/>
            <person name="Wei C.L."/>
            <person name="Yagi K."/>
            <person name="Yamanishi H."/>
            <person name="Zabarovsky E."/>
            <person name="Zhu S."/>
            <person name="Zimmer A."/>
            <person name="Hide W."/>
            <person name="Bult C."/>
            <person name="Grimmond S.M."/>
            <person name="Teasdale R.D."/>
            <person name="Liu E.T."/>
            <person name="Brusic V."/>
            <person name="Quackenbush J."/>
            <person name="Wahlestedt C."/>
            <person name="Mattick J.S."/>
            <person name="Hume D.A."/>
            <person name="Kai C."/>
            <person name="Sasaki D."/>
            <person name="Tomaru Y."/>
            <person name="Fukuda S."/>
            <person name="Kanamori-Katayama M."/>
            <person name="Suzuki M."/>
            <person name="Aoki J."/>
            <person name="Arakawa T."/>
            <person name="Iida J."/>
            <person name="Imamura K."/>
            <person name="Itoh M."/>
            <person name="Kato T."/>
            <person name="Kawaji H."/>
            <person name="Kawagashira N."/>
            <person name="Kawashima T."/>
            <person name="Kojima M."/>
            <person name="Kondo S."/>
            <person name="Konno H."/>
            <person name="Nakano K."/>
            <person name="Ninomiya N."/>
            <person name="Nishio T."/>
            <person name="Okada M."/>
            <person name="Plessy C."/>
            <person name="Shibata K."/>
            <person name="Shiraki T."/>
            <person name="Suzuki S."/>
            <person name="Tagami M."/>
            <person name="Waki K."/>
            <person name="Watahiki A."/>
            <person name="Okamura-Oho Y."/>
            <person name="Suzuki H."/>
            <person name="Kawai J."/>
            <person name="Hayashizaki Y."/>
        </authorList>
    </citation>
    <scope>NUCLEOTIDE SEQUENCE [LARGE SCALE MRNA] (ISOFORMS 1 AND 3)</scope>
    <source>
        <strain>C57BL/6J</strain>
        <tissue>Corpora quadrigemina</tissue>
        <tissue>Diencephalon</tissue>
        <tissue>Hippocampus</tissue>
        <tissue>Kidney</tissue>
    </source>
</reference>
<reference key="2">
    <citation type="journal article" date="2009" name="PLoS Biol.">
        <title>Lineage-specific biology revealed by a finished genome assembly of the mouse.</title>
        <authorList>
            <person name="Church D.M."/>
            <person name="Goodstadt L."/>
            <person name="Hillier L.W."/>
            <person name="Zody M.C."/>
            <person name="Goldstein S."/>
            <person name="She X."/>
            <person name="Bult C.J."/>
            <person name="Agarwala R."/>
            <person name="Cherry J.L."/>
            <person name="DiCuccio M."/>
            <person name="Hlavina W."/>
            <person name="Kapustin Y."/>
            <person name="Meric P."/>
            <person name="Maglott D."/>
            <person name="Birtle Z."/>
            <person name="Marques A.C."/>
            <person name="Graves T."/>
            <person name="Zhou S."/>
            <person name="Teague B."/>
            <person name="Potamousis K."/>
            <person name="Churas C."/>
            <person name="Place M."/>
            <person name="Herschleb J."/>
            <person name="Runnheim R."/>
            <person name="Forrest D."/>
            <person name="Amos-Landgraf J."/>
            <person name="Schwartz D.C."/>
            <person name="Cheng Z."/>
            <person name="Lindblad-Toh K."/>
            <person name="Eichler E.E."/>
            <person name="Ponting C.P."/>
        </authorList>
    </citation>
    <scope>NUCLEOTIDE SEQUENCE [LARGE SCALE GENOMIC DNA]</scope>
    <source>
        <strain>C57BL/6J</strain>
    </source>
</reference>
<reference key="3">
    <citation type="journal article" date="2004" name="Genome Res.">
        <title>The status, quality, and expansion of the NIH full-length cDNA project: the Mammalian Gene Collection (MGC).</title>
        <authorList>
            <consortium name="The MGC Project Team"/>
        </authorList>
    </citation>
    <scope>NUCLEOTIDE SEQUENCE [LARGE SCALE MRNA] (ISOFORMS 1 AND 2)</scope>
    <source>
        <strain>FVB/N</strain>
        <tissue>Kidney</tissue>
    </source>
</reference>
<reference key="4">
    <citation type="submission" date="2005-07" db="EMBL/GenBank/DDBJ databases">
        <authorList>
            <person name="Mural R.J."/>
            <person name="Adams M.D."/>
            <person name="Myers E.W."/>
            <person name="Smith H.O."/>
            <person name="Venter J.C."/>
        </authorList>
    </citation>
    <scope>NUCLEOTIDE SEQUENCE [LARGE SCALE GENOMIC DNA]</scope>
</reference>